<proteinExistence type="inferred from homology"/>
<keyword id="KW-0378">Hydrolase</keyword>
<keyword id="KW-0479">Metal-binding</keyword>
<keyword id="KW-0665">Pyrimidine biosynthesis</keyword>
<keyword id="KW-1185">Reference proteome</keyword>
<keyword id="KW-0862">Zinc</keyword>
<sequence length="376" mass="42633">MRIYDPFRKKWIEEEIETPFPSKGLVATFPFVDLHVHVRLNGGEDYSSLEEASLVGGFFKVVVQPNTKPLIDSKEVLERHLDLSKNRAVEFLFAVSPFGSIEAEGERVVGFSTDGIEYDYPTLVETMKKKKKALWFDHSQMYEVDGIFYEGAPLPFQKRPRSNEAIAIARTVLTGLEYGFERFHIQHVTTKYSVEVISFLKNLAKVSCEVTPHHLFFCYEDIKNTNFKINPPLGSPEDRRALIEAVKKDVIDVLATDHAPHHEKPDDFLTAPYGSTSIEIAFPAYYTALGDLELVVKKLTKKPLEVLGVEARLTEDTLVFIDPEAEFIVDAKKFKSKGKNSMFDGVRLKGKVVALKLKGRWVMIDGEVIADQKEND</sequence>
<feature type="chain" id="PRO_0000147264" description="Putative dihydroorotase">
    <location>
        <begin position="1"/>
        <end position="376"/>
    </location>
</feature>
<feature type="active site" evidence="1">
    <location>
        <position position="257"/>
    </location>
</feature>
<feature type="binding site" evidence="1">
    <location>
        <position position="35"/>
    </location>
    <ligand>
        <name>Zn(2+)</name>
        <dbReference type="ChEBI" id="CHEBI:29105"/>
        <label>1</label>
    </ligand>
</feature>
<feature type="binding site" evidence="1">
    <location>
        <begin position="37"/>
        <end position="39"/>
    </location>
    <ligand>
        <name>substrate</name>
    </ligand>
</feature>
<feature type="binding site" evidence="1">
    <location>
        <position position="37"/>
    </location>
    <ligand>
        <name>Zn(2+)</name>
        <dbReference type="ChEBI" id="CHEBI:29105"/>
        <label>1</label>
    </ligand>
</feature>
<feature type="binding site" evidence="1">
    <location>
        <position position="66"/>
    </location>
    <ligand>
        <name>substrate</name>
    </ligand>
</feature>
<feature type="binding site" evidence="1">
    <location>
        <position position="114"/>
    </location>
    <ligand>
        <name>Zn(2+)</name>
        <dbReference type="ChEBI" id="CHEBI:29105"/>
        <label>1</label>
    </ligand>
</feature>
<feature type="binding site" evidence="1">
    <location>
        <position position="114"/>
    </location>
    <ligand>
        <name>Zn(2+)</name>
        <dbReference type="ChEBI" id="CHEBI:29105"/>
        <label>2</label>
    </ligand>
</feature>
<feature type="binding site" evidence="1">
    <location>
        <position position="138"/>
    </location>
    <ligand>
        <name>Zn(2+)</name>
        <dbReference type="ChEBI" id="CHEBI:29105"/>
        <label>2</label>
    </ligand>
</feature>
<feature type="binding site" evidence="1">
    <location>
        <position position="187"/>
    </location>
    <ligand>
        <name>Zn(2+)</name>
        <dbReference type="ChEBI" id="CHEBI:29105"/>
        <label>2</label>
    </ligand>
</feature>
<feature type="binding site" evidence="1">
    <location>
        <position position="230"/>
    </location>
    <ligand>
        <name>substrate</name>
    </ligand>
</feature>
<feature type="binding site" evidence="1">
    <location>
        <position position="257"/>
    </location>
    <ligand>
        <name>Zn(2+)</name>
        <dbReference type="ChEBI" id="CHEBI:29105"/>
        <label>1</label>
    </ligand>
</feature>
<feature type="binding site" evidence="1">
    <location>
        <position position="261"/>
    </location>
    <ligand>
        <name>substrate</name>
    </ligand>
</feature>
<feature type="binding site" evidence="1">
    <location>
        <begin position="273"/>
        <end position="274"/>
    </location>
    <ligand>
        <name>substrate</name>
    </ligand>
</feature>
<evidence type="ECO:0000250" key="1">
    <source>
        <dbReference type="UniProtKB" id="Q81WF0"/>
    </source>
</evidence>
<evidence type="ECO:0000305" key="2"/>
<reference key="1">
    <citation type="journal article" date="1999" name="Nature">
        <title>Evidence for lateral gene transfer between Archaea and Bacteria from genome sequence of Thermotoga maritima.</title>
        <authorList>
            <person name="Nelson K.E."/>
            <person name="Clayton R.A."/>
            <person name="Gill S.R."/>
            <person name="Gwinn M.L."/>
            <person name="Dodson R.J."/>
            <person name="Haft D.H."/>
            <person name="Hickey E.K."/>
            <person name="Peterson J.D."/>
            <person name="Nelson W.C."/>
            <person name="Ketchum K.A."/>
            <person name="McDonald L.A."/>
            <person name="Utterback T.R."/>
            <person name="Malek J.A."/>
            <person name="Linher K.D."/>
            <person name="Garrett M.M."/>
            <person name="Stewart A.M."/>
            <person name="Cotton M.D."/>
            <person name="Pratt M.S."/>
            <person name="Phillips C.A."/>
            <person name="Richardson D.L."/>
            <person name="Heidelberg J.F."/>
            <person name="Sutton G.G."/>
            <person name="Fleischmann R.D."/>
            <person name="Eisen J.A."/>
            <person name="White O."/>
            <person name="Salzberg S.L."/>
            <person name="Smith H.O."/>
            <person name="Venter J.C."/>
            <person name="Fraser C.M."/>
        </authorList>
    </citation>
    <scope>NUCLEOTIDE SEQUENCE [LARGE SCALE GENOMIC DNA]</scope>
    <source>
        <strain>ATCC 43589 / DSM 3109 / JCM 10099 / NBRC 100826 / MSB8</strain>
    </source>
</reference>
<gene>
    <name type="primary">pyrC</name>
    <name type="ordered locus">TM_0335</name>
</gene>
<comment type="function">
    <text evidence="1">Catalyzes the reversible cyclization of carbamoyl aspartate to dihydroorotate.</text>
</comment>
<comment type="catalytic activity">
    <reaction evidence="1">
        <text>(S)-dihydroorotate + H2O = N-carbamoyl-L-aspartate + H(+)</text>
        <dbReference type="Rhea" id="RHEA:24296"/>
        <dbReference type="ChEBI" id="CHEBI:15377"/>
        <dbReference type="ChEBI" id="CHEBI:15378"/>
        <dbReference type="ChEBI" id="CHEBI:30864"/>
        <dbReference type="ChEBI" id="CHEBI:32814"/>
        <dbReference type="EC" id="3.5.2.3"/>
    </reaction>
</comment>
<comment type="cofactor">
    <cofactor evidence="1">
        <name>Zn(2+)</name>
        <dbReference type="ChEBI" id="CHEBI:29105"/>
    </cofactor>
    <text evidence="1">Binds 2 Zn(2+) ions per subunit.</text>
</comment>
<comment type="pathway">
    <text evidence="1">Pyrimidine metabolism; UMP biosynthesis via de novo pathway; (S)-dihydroorotate from bicarbonate: step 3/3.</text>
</comment>
<comment type="similarity">
    <text evidence="2">Belongs to the metallo-dependent hydrolases superfamily. DHOase family. Class I DHOase subfamily.</text>
</comment>
<organism>
    <name type="scientific">Thermotoga maritima (strain ATCC 43589 / DSM 3109 / JCM 10099 / NBRC 100826 / MSB8)</name>
    <dbReference type="NCBI Taxonomy" id="243274"/>
    <lineage>
        <taxon>Bacteria</taxon>
        <taxon>Thermotogati</taxon>
        <taxon>Thermotogota</taxon>
        <taxon>Thermotogae</taxon>
        <taxon>Thermotogales</taxon>
        <taxon>Thermotogaceae</taxon>
        <taxon>Thermotoga</taxon>
    </lineage>
</organism>
<name>PYRC_THEMA</name>
<protein>
    <recommendedName>
        <fullName evidence="1">Putative dihydroorotase</fullName>
        <shortName evidence="1">DHOase</shortName>
        <ecNumber evidence="1">3.5.2.3</ecNumber>
    </recommendedName>
</protein>
<dbReference type="EC" id="3.5.2.3" evidence="1"/>
<dbReference type="EMBL" id="AE000512">
    <property type="protein sequence ID" value="AAD35422.1"/>
    <property type="molecule type" value="Genomic_DNA"/>
</dbReference>
<dbReference type="PIR" id="A72391">
    <property type="entry name" value="A72391"/>
</dbReference>
<dbReference type="RefSeq" id="NP_228146.1">
    <property type="nucleotide sequence ID" value="NC_000853.1"/>
</dbReference>
<dbReference type="RefSeq" id="WP_004083103.1">
    <property type="nucleotide sequence ID" value="NZ_CP011107.1"/>
</dbReference>
<dbReference type="SMR" id="Q9WYH0"/>
<dbReference type="FunCoup" id="Q9WYH0">
    <property type="interactions" value="240"/>
</dbReference>
<dbReference type="STRING" id="243274.TM_0335"/>
<dbReference type="PaxDb" id="243274-THEMA_03045"/>
<dbReference type="EnsemblBacteria" id="AAD35422">
    <property type="protein sequence ID" value="AAD35422"/>
    <property type="gene ID" value="TM_0335"/>
</dbReference>
<dbReference type="KEGG" id="tma:TM0335"/>
<dbReference type="KEGG" id="tmi:THEMA_03045"/>
<dbReference type="KEGG" id="tmw:THMA_0343"/>
<dbReference type="PATRIC" id="fig|243274.18.peg.594"/>
<dbReference type="eggNOG" id="COG0044">
    <property type="taxonomic scope" value="Bacteria"/>
</dbReference>
<dbReference type="InParanoid" id="Q9WYH0"/>
<dbReference type="OrthoDB" id="9765462at2"/>
<dbReference type="UniPathway" id="UPA00070">
    <property type="reaction ID" value="UER00117"/>
</dbReference>
<dbReference type="Proteomes" id="UP000008183">
    <property type="component" value="Chromosome"/>
</dbReference>
<dbReference type="GO" id="GO:0005737">
    <property type="term" value="C:cytoplasm"/>
    <property type="evidence" value="ECO:0000318"/>
    <property type="project" value="GO_Central"/>
</dbReference>
<dbReference type="GO" id="GO:0004038">
    <property type="term" value="F:allantoinase activity"/>
    <property type="evidence" value="ECO:0000318"/>
    <property type="project" value="GO_Central"/>
</dbReference>
<dbReference type="GO" id="GO:0004151">
    <property type="term" value="F:dihydroorotase activity"/>
    <property type="evidence" value="ECO:0007669"/>
    <property type="project" value="UniProtKB-EC"/>
</dbReference>
<dbReference type="GO" id="GO:0046872">
    <property type="term" value="F:metal ion binding"/>
    <property type="evidence" value="ECO:0007669"/>
    <property type="project" value="UniProtKB-KW"/>
</dbReference>
<dbReference type="GO" id="GO:0044205">
    <property type="term" value="P:'de novo' UMP biosynthetic process"/>
    <property type="evidence" value="ECO:0007669"/>
    <property type="project" value="UniProtKB-UniPathway"/>
</dbReference>
<dbReference type="GO" id="GO:0006145">
    <property type="term" value="P:purine nucleobase catabolic process"/>
    <property type="evidence" value="ECO:0000318"/>
    <property type="project" value="GO_Central"/>
</dbReference>
<dbReference type="Gene3D" id="3.20.20.140">
    <property type="entry name" value="Metal-dependent hydrolases"/>
    <property type="match status" value="1"/>
</dbReference>
<dbReference type="InterPro" id="IPR050138">
    <property type="entry name" value="DHOase/Allantoinase_Hydrolase"/>
</dbReference>
<dbReference type="InterPro" id="IPR002195">
    <property type="entry name" value="Dihydroorotase_CS"/>
</dbReference>
<dbReference type="InterPro" id="IPR011059">
    <property type="entry name" value="Metal-dep_hydrolase_composite"/>
</dbReference>
<dbReference type="InterPro" id="IPR032466">
    <property type="entry name" value="Metal_Hydrolase"/>
</dbReference>
<dbReference type="NCBIfam" id="NF006840">
    <property type="entry name" value="PRK09357.2-1"/>
    <property type="match status" value="1"/>
</dbReference>
<dbReference type="PANTHER" id="PTHR43668">
    <property type="entry name" value="ALLANTOINASE"/>
    <property type="match status" value="1"/>
</dbReference>
<dbReference type="PANTHER" id="PTHR43668:SF2">
    <property type="entry name" value="ALLANTOINASE"/>
    <property type="match status" value="1"/>
</dbReference>
<dbReference type="SUPFAM" id="SSF51338">
    <property type="entry name" value="Composite domain of metallo-dependent hydrolases"/>
    <property type="match status" value="1"/>
</dbReference>
<dbReference type="SUPFAM" id="SSF51556">
    <property type="entry name" value="Metallo-dependent hydrolases"/>
    <property type="match status" value="1"/>
</dbReference>
<dbReference type="PROSITE" id="PS00482">
    <property type="entry name" value="DIHYDROOROTASE_1"/>
    <property type="match status" value="1"/>
</dbReference>
<accession>Q9WYH0</accession>